<keyword id="KW-0002">3D-structure</keyword>
<keyword id="KW-0106">Calcium</keyword>
<keyword id="KW-1003">Cell membrane</keyword>
<keyword id="KW-0225">Disease variant</keyword>
<keyword id="KW-1015">Disulfide bond</keyword>
<keyword id="KW-0887">Epilepsy</keyword>
<keyword id="KW-0325">Glycoprotein</keyword>
<keyword id="KW-0407">Ion channel</keyword>
<keyword id="KW-0406">Ion transport</keyword>
<keyword id="KW-1071">Ligand-gated ion channel</keyword>
<keyword id="KW-0460">Magnesium</keyword>
<keyword id="KW-0472">Membrane</keyword>
<keyword id="KW-0488">Methylation</keyword>
<keyword id="KW-0597">Phosphoprotein</keyword>
<keyword id="KW-0628">Postsynaptic cell membrane</keyword>
<keyword id="KW-1267">Proteomics identification</keyword>
<keyword id="KW-0675">Receptor</keyword>
<keyword id="KW-1185">Reference proteome</keyword>
<keyword id="KW-0732">Signal</keyword>
<keyword id="KW-0770">Synapse</keyword>
<keyword id="KW-0812">Transmembrane</keyword>
<keyword id="KW-1133">Transmembrane helix</keyword>
<keyword id="KW-0813">Transport</keyword>
<organism>
    <name type="scientific">Homo sapiens</name>
    <name type="common">Human</name>
    <dbReference type="NCBI Taxonomy" id="9606"/>
    <lineage>
        <taxon>Eukaryota</taxon>
        <taxon>Metazoa</taxon>
        <taxon>Chordata</taxon>
        <taxon>Craniata</taxon>
        <taxon>Vertebrata</taxon>
        <taxon>Euteleostomi</taxon>
        <taxon>Mammalia</taxon>
        <taxon>Eutheria</taxon>
        <taxon>Euarchontoglires</taxon>
        <taxon>Primates</taxon>
        <taxon>Haplorrhini</taxon>
        <taxon>Catarrhini</taxon>
        <taxon>Hominidae</taxon>
        <taxon>Homo</taxon>
    </lineage>
</organism>
<protein>
    <recommendedName>
        <fullName evidence="20">Glutamate receptor ionotropic, NMDA 2D</fullName>
        <shortName evidence="18">GluN2D</shortName>
    </recommendedName>
    <alternativeName>
        <fullName>EB11</fullName>
    </alternativeName>
    <alternativeName>
        <fullName evidence="4">Glutamate [NMDA] receptor subunit epsilon-4</fullName>
    </alternativeName>
    <alternativeName>
        <fullName>N-methyl D-aspartate receptor subtype 2D</fullName>
        <shortName evidence="19">NMDAR2D</shortName>
        <shortName>NR2D</shortName>
    </alternativeName>
</protein>
<accession>O15399</accession>
<comment type="function">
    <text evidence="2 5 11 12 13 14 16">Component of N-methyl-D-aspartate (NMDA) receptors (NMDARs) that function as heterotetrameric, ligand-gated cation channels with high calcium permeability and voltage-dependent block by Mg(2+) (PubMed:26875626, PubMed:27616483, PubMed:28126851, PubMed:9489750). Participates in synaptic plasticity for learning and memory formation (By similarity). Channel activation requires binding of the neurotransmitter L-glutamate to the GluN2 subunit, glycine or D-serine binding to the GluN1 subunit, plus membrane depolarization to eliminate channel inhibition by Mg(2+) (PubMed:26875626, PubMed:27616483, PubMed:28126851, PubMed:9489750). NMDARs mediate simultaneously the potasium efflux and the influx of calcium and sodium (By similarity). Each GluN2 subunit confers differential attributes to channel properties, including activation, deactivation and desensitization kinetics, pH sensitivity, Ca2(+) permeability, and binding to allosteric modulators (PubMed:26875626, PubMed:28095420, PubMed:28126851, PubMed:9489750).</text>
</comment>
<comment type="catalytic activity">
    <reaction evidence="11">
        <text>Ca(2+)(in) = Ca(2+)(out)</text>
        <dbReference type="Rhea" id="RHEA:29671"/>
        <dbReference type="ChEBI" id="CHEBI:29108"/>
    </reaction>
</comment>
<comment type="catalytic activity">
    <reaction evidence="6">
        <text>Na(+)(in) = Na(+)(out)</text>
        <dbReference type="Rhea" id="RHEA:34963"/>
        <dbReference type="ChEBI" id="CHEBI:29101"/>
    </reaction>
</comment>
<comment type="catalytic activity">
    <reaction evidence="2">
        <text>K(+)(in) = K(+)(out)</text>
        <dbReference type="Rhea" id="RHEA:29463"/>
        <dbReference type="ChEBI" id="CHEBI:29103"/>
    </reaction>
</comment>
<comment type="subunit">
    <text evidence="1 11 14 15 16 20">Heterotetramer. Forms heterotetrameric channels composed of two GluN1/zeta subunits (GRIN1), and two identical GluN2/epsilon subunits (GRIN2A, GRIN2B, GRIN2C or GRIN2D) or GluN3 subunits (GRIN3A or GRIN3B) (in vitro) (PubMed:26875626, PubMed:28126851, PubMed:36959261, PubMed:9489750). In vivo, the subunit composition may depend on the expression levels of the different subunits (Probable). Interacts with PDZ domains of PATJ and DLG4 (By similarity).</text>
</comment>
<comment type="interaction">
    <interactant intactId="EBI-1754030">
        <id>O15399</id>
    </interactant>
    <interactant intactId="EBI-349596">
        <id>Q62936</id>
        <label>Dlg3</label>
    </interactant>
    <organismsDiffer>true</organismsDiffer>
    <experiments>2</experiments>
</comment>
<comment type="subcellular location">
    <subcellularLocation>
        <location evidence="11 14 16">Cell membrane</location>
        <topology>Multi-pass membrane protein</topology>
    </subcellularLocation>
    <subcellularLocation>
        <location>Postsynaptic cell membrane</location>
        <topology>Multi-pass membrane protein</topology>
    </subcellularLocation>
</comment>
<comment type="domain">
    <text evidence="3">A hydrophobic region that gives rise to the prediction of a transmembrane span does not cross the membrane, but is part of a discontinuously helical region that dips into the membrane and is probably part of the pore and of the selectivity filter.</text>
</comment>
<comment type="disease" evidence="12">
    <disease id="DI-04845">
        <name>Developmental and epileptic encephalopathy 46</name>
        <acronym>DEE46</acronym>
        <description>A form of epileptic encephalopathy, a heterogeneous group of severe early-onset epilepsies characterized by refractory seizures, neurodevelopmental impairment, and poor prognosis. Development is normal prior to seizure onset, after which cognitive and motor delays become apparent.</description>
        <dbReference type="MIM" id="617162"/>
    </disease>
    <text>The disease is caused by variants affecting the gene represented in this entry.</text>
</comment>
<comment type="similarity">
    <text evidence="20">Belongs to the glutamate-gated ion channel (TC 1.A.10.1) family. NR2D/GRIN2D subfamily.</text>
</comment>
<reference key="1">
    <citation type="journal article" date="1998" name="J. Neurochem.">
        <title>Functional characterization of human N-methyl-D-aspartate subtype 1A/2D receptors.</title>
        <authorList>
            <person name="Hess S.D."/>
            <person name="Daggett L.P."/>
            <person name="Deal C."/>
            <person name="Lu C.-C."/>
            <person name="Johnson E.C."/>
            <person name="Velicelebi G."/>
        </authorList>
    </citation>
    <scope>NUCLEOTIDE SEQUENCE [MRNA]</scope>
    <scope>FUNCTION</scope>
    <scope>SUBCELLULAR LOCATION</scope>
    <scope>SUBUNIT</scope>
    <source>
        <tissue>Fetal brain</tissue>
    </source>
</reference>
<reference key="2">
    <citation type="journal article" date="2004" name="Nature">
        <title>The DNA sequence and biology of human chromosome 19.</title>
        <authorList>
            <person name="Grimwood J."/>
            <person name="Gordon L.A."/>
            <person name="Olsen A.S."/>
            <person name="Terry A."/>
            <person name="Schmutz J."/>
            <person name="Lamerdin J.E."/>
            <person name="Hellsten U."/>
            <person name="Goodstein D."/>
            <person name="Couronne O."/>
            <person name="Tran-Gyamfi M."/>
            <person name="Aerts A."/>
            <person name="Altherr M."/>
            <person name="Ashworth L."/>
            <person name="Bajorek E."/>
            <person name="Black S."/>
            <person name="Branscomb E."/>
            <person name="Caenepeel S."/>
            <person name="Carrano A.V."/>
            <person name="Caoile C."/>
            <person name="Chan Y.M."/>
            <person name="Christensen M."/>
            <person name="Cleland C.A."/>
            <person name="Copeland A."/>
            <person name="Dalin E."/>
            <person name="Dehal P."/>
            <person name="Denys M."/>
            <person name="Detter J.C."/>
            <person name="Escobar J."/>
            <person name="Flowers D."/>
            <person name="Fotopulos D."/>
            <person name="Garcia C."/>
            <person name="Georgescu A.M."/>
            <person name="Glavina T."/>
            <person name="Gomez M."/>
            <person name="Gonzales E."/>
            <person name="Groza M."/>
            <person name="Hammon N."/>
            <person name="Hawkins T."/>
            <person name="Haydu L."/>
            <person name="Ho I."/>
            <person name="Huang W."/>
            <person name="Israni S."/>
            <person name="Jett J."/>
            <person name="Kadner K."/>
            <person name="Kimball H."/>
            <person name="Kobayashi A."/>
            <person name="Larionov V."/>
            <person name="Leem S.-H."/>
            <person name="Lopez F."/>
            <person name="Lou Y."/>
            <person name="Lowry S."/>
            <person name="Malfatti S."/>
            <person name="Martinez D."/>
            <person name="McCready P.M."/>
            <person name="Medina C."/>
            <person name="Morgan J."/>
            <person name="Nelson K."/>
            <person name="Nolan M."/>
            <person name="Ovcharenko I."/>
            <person name="Pitluck S."/>
            <person name="Pollard M."/>
            <person name="Popkie A.P."/>
            <person name="Predki P."/>
            <person name="Quan G."/>
            <person name="Ramirez L."/>
            <person name="Rash S."/>
            <person name="Retterer J."/>
            <person name="Rodriguez A."/>
            <person name="Rogers S."/>
            <person name="Salamov A."/>
            <person name="Salazar A."/>
            <person name="She X."/>
            <person name="Smith D."/>
            <person name="Slezak T."/>
            <person name="Solovyev V."/>
            <person name="Thayer N."/>
            <person name="Tice H."/>
            <person name="Tsai M."/>
            <person name="Ustaszewska A."/>
            <person name="Vo N."/>
            <person name="Wagner M."/>
            <person name="Wheeler J."/>
            <person name="Wu K."/>
            <person name="Xie G."/>
            <person name="Yang J."/>
            <person name="Dubchak I."/>
            <person name="Furey T.S."/>
            <person name="DeJong P."/>
            <person name="Dickson M."/>
            <person name="Gordon D."/>
            <person name="Eichler E.E."/>
            <person name="Pennacchio L.A."/>
            <person name="Richardson P."/>
            <person name="Stubbs L."/>
            <person name="Rokhsar D.S."/>
            <person name="Myers R.M."/>
            <person name="Rubin E.M."/>
            <person name="Lucas S.M."/>
        </authorList>
    </citation>
    <scope>NUCLEOTIDE SEQUENCE [LARGE SCALE GENOMIC DNA]</scope>
</reference>
<reference key="3">
    <citation type="journal article" date="2016" name="Am. J. Hum. Genet.">
        <title>GRIN2D recurrent de novo dominant mutation causes a severe epileptic encephalopathy treatable with NMDA receptor channel blockers.</title>
        <authorList>
            <person name="Li D."/>
            <person name="Yuan H."/>
            <person name="Ortiz-Gonzalez X.R."/>
            <person name="Marsh E.D."/>
            <person name="Tian L."/>
            <person name="McCormick E.M."/>
            <person name="Kosobucki G.J."/>
            <person name="Chen W."/>
            <person name="Schulien A.J."/>
            <person name="Chiavacci R."/>
            <person name="Tankovic A."/>
            <person name="Naase C."/>
            <person name="Brueckner F."/>
            <person name="von Stuelpnagel-Steinbeis C."/>
            <person name="Hu C."/>
            <person name="Kusumoto H."/>
            <person name="Hedrich U.B."/>
            <person name="Elsen G."/>
            <person name="Hoertnagel K."/>
            <person name="Aizenman E."/>
            <person name="Lemke J.R."/>
            <person name="Hakonarson H."/>
            <person name="Traynelis S.F."/>
            <person name="Falk M.J."/>
        </authorList>
    </citation>
    <scope>FUNCTION</scope>
    <scope>INVOLVEMENT IN DEE46</scope>
    <scope>VARIANT DEE46 ILE-667</scope>
    <scope>CHARACTERIZATION OF VARIANT DEE46 ILE-667</scope>
</reference>
<reference key="4">
    <citation type="journal article" date="2016" name="Neuron">
        <title>Positive Allosteric Modulators of GluN2A-Containing NMDARs with Distinct Modes of Action and Impacts on Circuit Function.</title>
        <authorList>
            <person name="Hackos D.H."/>
            <person name="Lupardus P.J."/>
            <person name="Grand T."/>
            <person name="Chen Y."/>
            <person name="Wang T.M."/>
            <person name="Reynen P."/>
            <person name="Gustafson A."/>
            <person name="Wallweber H.J."/>
            <person name="Volgraf M."/>
            <person name="Sellers B.D."/>
            <person name="Schwarz J.B."/>
            <person name="Paoletti P."/>
            <person name="Sheng M."/>
            <person name="Zhou Q."/>
            <person name="Hanson J.E."/>
        </authorList>
    </citation>
    <scope>FUNCTION</scope>
    <scope>TRANSPORTER ACTIVITY</scope>
    <scope>SUBCELLULAR LOCATION</scope>
    <scope>SUBUNIT</scope>
</reference>
<reference key="5">
    <citation type="journal article" date="2017" name="Mol. Pharmacol.">
        <title>Functional evaluation of a de novo GRIN2A mutation identified in a patient with profound global developmental delay and refractory epilepsy.</title>
        <authorList>
            <person name="Chen W."/>
            <person name="Tankovic A."/>
            <person name="Burger P.B."/>
            <person name="Kusumoto H."/>
            <person name="Traynelis S.F."/>
            <person name="Yuan H."/>
        </authorList>
    </citation>
    <scope>FUNCTION</scope>
    <scope>SUBCELLULAR LOCATION</scope>
    <scope>SUBUNIT</scope>
    <scope>MUTAGENESIS OF MET-845</scope>
</reference>
<reference key="6">
    <citation type="journal article" date="2017" name="PLoS Genet.">
        <title>Molecular mechanism of disease-associated mutations in the pre-M1 helix of NMDA receptors and potential rescue pharmacology.</title>
        <authorList>
            <person name="Ogden K.K."/>
            <person name="Chen W."/>
            <person name="Swanger S.A."/>
            <person name="McDaniel M.J."/>
            <person name="Fan L.Z."/>
            <person name="Hu C."/>
            <person name="Tankovic A."/>
            <person name="Kusumoto H."/>
            <person name="Kosobucki G.J."/>
            <person name="Schulien A.J."/>
            <person name="Su Z."/>
            <person name="Pecha J."/>
            <person name="Bhattacharya S."/>
            <person name="Petrovski S."/>
            <person name="Cohen A.E."/>
            <person name="Aizenman E."/>
            <person name="Traynelis S.F."/>
            <person name="Yuan H."/>
        </authorList>
    </citation>
    <scope>FUNCTION</scope>
    <scope>MUTAGENESIS OF PRO-580</scope>
</reference>
<reference evidence="23 24 25 26 27" key="7">
    <citation type="journal article" date="2023" name="Nat. Struct. Mol. Biol.">
        <title>Distinct structure and gating mechanism in diverse NMDA receptors with GluN2C and GluN2D subunits.</title>
        <authorList>
            <person name="Zhang J."/>
            <person name="Zhang M."/>
            <person name="Wang Q."/>
            <person name="Wen H."/>
            <person name="Liu Z."/>
            <person name="Wang F."/>
            <person name="Wang Y."/>
            <person name="Yao F."/>
            <person name="Song N."/>
            <person name="Kou Z."/>
            <person name="Li Y."/>
            <person name="Guo F."/>
            <person name="Zhu S."/>
        </authorList>
    </citation>
    <scope>STRUCTURE BY ELECTRON MICROSCOPY (3.60 ANGSTROMS) OF 1-879 IN COMPLEX WITH GRIN1 AND GLUTAMATE</scope>
    <scope>DISULFIDE BONDS</scope>
    <scope>TOPOLOGY</scope>
    <scope>SUBUNIT</scope>
</reference>
<reference key="8">
    <citation type="journal article" date="2006" name="Science">
        <title>The consensus coding sequences of human breast and colorectal cancers.</title>
        <authorList>
            <person name="Sjoeblom T."/>
            <person name="Jones S."/>
            <person name="Wood L.D."/>
            <person name="Parsons D.W."/>
            <person name="Lin J."/>
            <person name="Barber T.D."/>
            <person name="Mandelker D."/>
            <person name="Leary R.J."/>
            <person name="Ptak J."/>
            <person name="Silliman N."/>
            <person name="Szabo S."/>
            <person name="Buckhaults P."/>
            <person name="Farrell C."/>
            <person name="Meeh P."/>
            <person name="Markowitz S.D."/>
            <person name="Willis J."/>
            <person name="Dawson D."/>
            <person name="Willson J.K.V."/>
            <person name="Gazdar A.F."/>
            <person name="Hartigan J."/>
            <person name="Wu L."/>
            <person name="Liu C."/>
            <person name="Parmigiani G."/>
            <person name="Park B.H."/>
            <person name="Bachman K.E."/>
            <person name="Papadopoulos N."/>
            <person name="Vogelstein B."/>
            <person name="Kinzler K.W."/>
            <person name="Velculescu V.E."/>
        </authorList>
    </citation>
    <scope>VARIANTS [LARGE SCALE ANALYSIS] SER-140; ARG-286 AND GLY-527</scope>
</reference>
<reference key="9">
    <citation type="journal article" date="2011" name="Transl. Psychiatry">
        <title>Rare mutations in N-methyl-D-aspartate glutamate receptors in autism spectrum disorders and schizophrenia.</title>
        <authorList>
            <consortium name="S2D team"/>
            <person name="Tarabeux J."/>
            <person name="Kebir O."/>
            <person name="Gauthier J."/>
            <person name="Hamdan F.F."/>
            <person name="Xiong L."/>
            <person name="Piton A."/>
            <person name="Spiegelman D."/>
            <person name="Henrion E."/>
            <person name="Millet B."/>
            <person name="Fathalli F."/>
            <person name="Joober R."/>
            <person name="Rapoport J.L."/>
            <person name="DeLisi L.E."/>
            <person name="Fombonne E."/>
            <person name="Mottron L."/>
            <person name="Forget-Dubois N."/>
            <person name="Boivin M."/>
            <person name="Michaud J.L."/>
            <person name="Drapeau P."/>
            <person name="Lafreniere R.G."/>
            <person name="Rouleau G.A."/>
            <person name="Krebs M.O."/>
        </authorList>
    </citation>
    <scope>VARIANTS VAL-466; LEU-592; VAL-733; HIS-872; ILE-883; VAL-922; THR-926; PRO-982 AND SER-1317</scope>
</reference>
<dbReference type="EMBL" id="U77783">
    <property type="protein sequence ID" value="AAC15910.1"/>
    <property type="molecule type" value="mRNA"/>
</dbReference>
<dbReference type="EMBL" id="AC008403">
    <property type="status" value="NOT_ANNOTATED_CDS"/>
    <property type="molecule type" value="Genomic_DNA"/>
</dbReference>
<dbReference type="EMBL" id="AC011527">
    <property type="status" value="NOT_ANNOTATED_CDS"/>
    <property type="molecule type" value="Genomic_DNA"/>
</dbReference>
<dbReference type="CCDS" id="CCDS12719.1"/>
<dbReference type="RefSeq" id="NP_000827.2">
    <property type="nucleotide sequence ID" value="NM_000836.4"/>
</dbReference>
<dbReference type="RefSeq" id="XP_011525174.1">
    <property type="nucleotide sequence ID" value="XM_011526872.2"/>
</dbReference>
<dbReference type="PDB" id="7YFF">
    <property type="method" value="EM"/>
    <property type="resolution" value="3.60 A"/>
    <property type="chains" value="B/D=1-879"/>
</dbReference>
<dbReference type="PDB" id="7YFL">
    <property type="method" value="EM"/>
    <property type="resolution" value="3.90 A"/>
    <property type="chains" value="B/D=1-879"/>
</dbReference>
<dbReference type="PDB" id="7YFM">
    <property type="method" value="EM"/>
    <property type="resolution" value="5.10 A"/>
    <property type="chains" value="B/D=1-879"/>
</dbReference>
<dbReference type="PDB" id="7YFO">
    <property type="method" value="EM"/>
    <property type="resolution" value="6.40 A"/>
    <property type="chains" value="B/D=1-879"/>
</dbReference>
<dbReference type="PDB" id="7YFR">
    <property type="method" value="EM"/>
    <property type="resolution" value="5.10 A"/>
    <property type="chains" value="B/D=1-879"/>
</dbReference>
<dbReference type="PDB" id="8E96">
    <property type="method" value="EM"/>
    <property type="resolution" value="3.38 A"/>
    <property type="chains" value="B/D=28-879"/>
</dbReference>
<dbReference type="PDB" id="8Y1V">
    <property type="method" value="EM"/>
    <property type="resolution" value="4.20 A"/>
    <property type="chains" value="B/D=1-879"/>
</dbReference>
<dbReference type="PDB" id="9D37">
    <property type="method" value="EM"/>
    <property type="resolution" value="3.34 A"/>
    <property type="chains" value="D=28-880"/>
</dbReference>
<dbReference type="PDB" id="9D38">
    <property type="method" value="EM"/>
    <property type="resolution" value="3.95 A"/>
    <property type="chains" value="D=28-880"/>
</dbReference>
<dbReference type="PDB" id="9D39">
    <property type="method" value="EM"/>
    <property type="resolution" value="3.65 A"/>
    <property type="chains" value="D=28-880"/>
</dbReference>
<dbReference type="PDB" id="9D3A">
    <property type="method" value="EM"/>
    <property type="resolution" value="3.78 A"/>
    <property type="chains" value="D=28-880"/>
</dbReference>
<dbReference type="PDB" id="9D3B">
    <property type="method" value="EM"/>
    <property type="resolution" value="3.71 A"/>
    <property type="chains" value="D=28-880"/>
</dbReference>
<dbReference type="PDB" id="9D3C">
    <property type="method" value="EM"/>
    <property type="resolution" value="3.96 A"/>
    <property type="chains" value="D=28-880"/>
</dbReference>
<dbReference type="PDBsum" id="7YFF"/>
<dbReference type="PDBsum" id="7YFL"/>
<dbReference type="PDBsum" id="7YFM"/>
<dbReference type="PDBsum" id="7YFO"/>
<dbReference type="PDBsum" id="7YFR"/>
<dbReference type="PDBsum" id="8E96"/>
<dbReference type="PDBsum" id="8Y1V"/>
<dbReference type="PDBsum" id="9D37"/>
<dbReference type="PDBsum" id="9D38"/>
<dbReference type="PDBsum" id="9D39"/>
<dbReference type="PDBsum" id="9D3A"/>
<dbReference type="PDBsum" id="9D3B"/>
<dbReference type="PDBsum" id="9D3C"/>
<dbReference type="EMDB" id="EMD-27957"/>
<dbReference type="EMDB" id="EMD-33788"/>
<dbReference type="EMDB" id="EMD-33792"/>
<dbReference type="EMDB" id="EMD-33793"/>
<dbReference type="EMDB" id="EMD-33795"/>
<dbReference type="EMDB" id="EMD-33798"/>
<dbReference type="EMDB" id="EMD-38847"/>
<dbReference type="EMDB" id="EMD-46526"/>
<dbReference type="EMDB" id="EMD-46527"/>
<dbReference type="EMDB" id="EMD-46528"/>
<dbReference type="EMDB" id="EMD-46529"/>
<dbReference type="EMDB" id="EMD-46530"/>
<dbReference type="EMDB" id="EMD-46531"/>
<dbReference type="SMR" id="O15399"/>
<dbReference type="BioGRID" id="109163">
    <property type="interactions" value="10"/>
</dbReference>
<dbReference type="ComplexPortal" id="CPX-289">
    <property type="entry name" value="NMDA receptor complex, GluN1-GluN2D"/>
</dbReference>
<dbReference type="CORUM" id="O15399"/>
<dbReference type="FunCoup" id="O15399">
    <property type="interactions" value="835"/>
</dbReference>
<dbReference type="IntAct" id="O15399">
    <property type="interactions" value="7"/>
</dbReference>
<dbReference type="MINT" id="O15399"/>
<dbReference type="STRING" id="9606.ENSP00000263269"/>
<dbReference type="BindingDB" id="O15399"/>
<dbReference type="ChEMBL" id="CHEMBL2591"/>
<dbReference type="DrugBank" id="DB00659">
    <property type="generic name" value="Acamprosate"/>
</dbReference>
<dbReference type="DrugBank" id="DB06151">
    <property type="generic name" value="Acetylcysteine"/>
</dbReference>
<dbReference type="DrugBank" id="DB01238">
    <property type="generic name" value="Aripiprazole"/>
</dbReference>
<dbReference type="DrugBank" id="DB00289">
    <property type="generic name" value="Atomoxetine"/>
</dbReference>
<dbReference type="DrugBank" id="DB00647">
    <property type="generic name" value="Dextropropoxyphene"/>
</dbReference>
<dbReference type="DrugBank" id="DB00843">
    <property type="generic name" value="Donepezil"/>
</dbReference>
<dbReference type="DrugBank" id="DB00228">
    <property type="generic name" value="Enflurane"/>
</dbReference>
<dbReference type="DrugBank" id="DB11823">
    <property type="generic name" value="Esketamine"/>
</dbReference>
<dbReference type="DrugBank" id="DB13146">
    <property type="generic name" value="Fluciclovine (18F)"/>
</dbReference>
<dbReference type="DrugBank" id="DB06741">
    <property type="generic name" value="Gavestinel"/>
</dbReference>
<dbReference type="DrugBank" id="DB00142">
    <property type="generic name" value="Glutamic acid"/>
</dbReference>
<dbReference type="DrugBank" id="DB00874">
    <property type="generic name" value="Guaifenesin"/>
</dbReference>
<dbReference type="DrugBank" id="DB06738">
    <property type="generic name" value="Ketobemidone"/>
</dbReference>
<dbReference type="DrugBank" id="DB09409">
    <property type="generic name" value="Magnesium acetate tetrahydrate"/>
</dbReference>
<dbReference type="DrugBank" id="DB09481">
    <property type="generic name" value="Magnesium carbonate"/>
</dbReference>
<dbReference type="DrugBank" id="DB01043">
    <property type="generic name" value="Memantine"/>
</dbReference>
<dbReference type="DrugBank" id="DB00454">
    <property type="generic name" value="Meperidine"/>
</dbReference>
<dbReference type="DrugBank" id="DB00333">
    <property type="generic name" value="Methadone"/>
</dbReference>
<dbReference type="DrugBank" id="DB04896">
    <property type="generic name" value="Milnacipran"/>
</dbReference>
<dbReference type="DrugBank" id="DB01173">
    <property type="generic name" value="Orphenadrine"/>
</dbReference>
<dbReference type="DrugBank" id="DB00312">
    <property type="generic name" value="Pentobarbital"/>
</dbReference>
<dbReference type="DrugBank" id="DB01174">
    <property type="generic name" value="Phenobarbital"/>
</dbReference>
<dbReference type="DrugBank" id="DB01708">
    <property type="generic name" value="Prasterone"/>
</dbReference>
<dbReference type="DrugBank" id="DB00418">
    <property type="generic name" value="Secobarbital"/>
</dbReference>
<dbReference type="DrugBank" id="DB01520">
    <property type="generic name" value="Tenocyclidine"/>
</dbReference>
<dbReference type="DrugBank" id="DB00193">
    <property type="generic name" value="Tramadol"/>
</dbReference>
<dbReference type="DrugCentral" id="O15399"/>
<dbReference type="GlyCosmos" id="O15399">
    <property type="glycosylation" value="7 sites, No reported glycans"/>
</dbReference>
<dbReference type="GlyGen" id="O15399">
    <property type="glycosylation" value="8 sites, 2 N-linked glycans (2 sites)"/>
</dbReference>
<dbReference type="iPTMnet" id="O15399"/>
<dbReference type="PhosphoSitePlus" id="O15399"/>
<dbReference type="BioMuta" id="GRIN2D"/>
<dbReference type="MassIVE" id="O15399"/>
<dbReference type="PaxDb" id="9606-ENSP00000263269"/>
<dbReference type="PeptideAtlas" id="O15399"/>
<dbReference type="ProteomicsDB" id="48638"/>
<dbReference type="Antibodypedia" id="31709">
    <property type="antibodies" value="185 antibodies from 29 providers"/>
</dbReference>
<dbReference type="DNASU" id="2906"/>
<dbReference type="Ensembl" id="ENST00000263269.4">
    <property type="protein sequence ID" value="ENSP00000263269.2"/>
    <property type="gene ID" value="ENSG00000105464.4"/>
</dbReference>
<dbReference type="GeneID" id="2906"/>
<dbReference type="KEGG" id="hsa:2906"/>
<dbReference type="MANE-Select" id="ENST00000263269.4">
    <property type="protein sequence ID" value="ENSP00000263269.2"/>
    <property type="RefSeq nucleotide sequence ID" value="NM_000836.4"/>
    <property type="RefSeq protein sequence ID" value="NP_000827.2"/>
</dbReference>
<dbReference type="UCSC" id="uc002pjc.4">
    <property type="organism name" value="human"/>
</dbReference>
<dbReference type="AGR" id="HGNC:4588"/>
<dbReference type="CTD" id="2906"/>
<dbReference type="DisGeNET" id="2906"/>
<dbReference type="GeneCards" id="GRIN2D"/>
<dbReference type="GeneReviews" id="GRIN2D"/>
<dbReference type="HGNC" id="HGNC:4588">
    <property type="gene designation" value="GRIN2D"/>
</dbReference>
<dbReference type="HPA" id="ENSG00000105464">
    <property type="expression patterns" value="Tissue enhanced (brain)"/>
</dbReference>
<dbReference type="MalaCards" id="GRIN2D"/>
<dbReference type="MIM" id="602717">
    <property type="type" value="gene"/>
</dbReference>
<dbReference type="MIM" id="617162">
    <property type="type" value="phenotype"/>
</dbReference>
<dbReference type="neXtProt" id="NX_O15399"/>
<dbReference type="OpenTargets" id="ENSG00000105464"/>
<dbReference type="Orphanet" id="442835">
    <property type="disease" value="Non-specific early-onset epileptic encephalopathy"/>
</dbReference>
<dbReference type="PharmGKB" id="PA28982"/>
<dbReference type="VEuPathDB" id="HostDB:ENSG00000105464"/>
<dbReference type="eggNOG" id="KOG1053">
    <property type="taxonomic scope" value="Eukaryota"/>
</dbReference>
<dbReference type="GeneTree" id="ENSGT00940000159109"/>
<dbReference type="HOGENOM" id="CLU_002039_3_1_1"/>
<dbReference type="InParanoid" id="O15399"/>
<dbReference type="OMA" id="DRWRRPK"/>
<dbReference type="OrthoDB" id="5984008at2759"/>
<dbReference type="PAN-GO" id="O15399">
    <property type="GO annotations" value="6 GO annotations based on evolutionary models"/>
</dbReference>
<dbReference type="PhylomeDB" id="O15399"/>
<dbReference type="TreeFam" id="TF314731"/>
<dbReference type="PathwayCommons" id="O15399"/>
<dbReference type="Reactome" id="R-HSA-438066">
    <property type="pathway name" value="Unblocking of NMDA receptors, glutamate binding and activation"/>
</dbReference>
<dbReference type="Reactome" id="R-HSA-442982">
    <property type="pathway name" value="Ras activation upon Ca2+ influx through NMDA receptor"/>
</dbReference>
<dbReference type="Reactome" id="R-HSA-5673001">
    <property type="pathway name" value="RAF/MAP kinase cascade"/>
</dbReference>
<dbReference type="Reactome" id="R-HSA-6794361">
    <property type="pathway name" value="Neurexins and neuroligins"/>
</dbReference>
<dbReference type="Reactome" id="R-HSA-8849932">
    <property type="pathway name" value="Synaptic adhesion-like molecules"/>
</dbReference>
<dbReference type="Reactome" id="R-HSA-9609736">
    <property type="pathway name" value="Assembly and cell surface presentation of NMDA receptors"/>
</dbReference>
<dbReference type="Reactome" id="R-HSA-9617324">
    <property type="pathway name" value="Negative regulation of NMDA receptor-mediated neuronal transmission"/>
</dbReference>
<dbReference type="Reactome" id="R-HSA-9620244">
    <property type="pathway name" value="Long-term potentiation"/>
</dbReference>
<dbReference type="SignaLink" id="O15399"/>
<dbReference type="SIGNOR" id="O15399"/>
<dbReference type="BioGRID-ORCS" id="2906">
    <property type="hits" value="17 hits in 1167 CRISPR screens"/>
</dbReference>
<dbReference type="CD-CODE" id="FB4E32DD">
    <property type="entry name" value="Presynaptic clusters and postsynaptic densities"/>
</dbReference>
<dbReference type="ChiTaRS" id="GRIN2D">
    <property type="organism name" value="human"/>
</dbReference>
<dbReference type="GeneWiki" id="GRIN2D"/>
<dbReference type="GenomeRNAi" id="2906"/>
<dbReference type="Pharos" id="O15399">
    <property type="development level" value="Tclin"/>
</dbReference>
<dbReference type="PRO" id="PR:O15399"/>
<dbReference type="Proteomes" id="UP000005640">
    <property type="component" value="Chromosome 19"/>
</dbReference>
<dbReference type="RNAct" id="O15399">
    <property type="molecule type" value="protein"/>
</dbReference>
<dbReference type="Bgee" id="ENSG00000105464">
    <property type="expression patterns" value="Expressed in cingulate cortex and 93 other cell types or tissues"/>
</dbReference>
<dbReference type="GO" id="GO:0005789">
    <property type="term" value="C:endoplasmic reticulum membrane"/>
    <property type="evidence" value="ECO:0000304"/>
    <property type="project" value="Reactome"/>
</dbReference>
<dbReference type="GO" id="GO:0098978">
    <property type="term" value="C:glutamatergic synapse"/>
    <property type="evidence" value="ECO:0007669"/>
    <property type="project" value="Ensembl"/>
</dbReference>
<dbReference type="GO" id="GO:0098686">
    <property type="term" value="C:hippocampal mossy fiber to CA3 synapse"/>
    <property type="evidence" value="ECO:0007669"/>
    <property type="project" value="Ensembl"/>
</dbReference>
<dbReference type="GO" id="GO:0017146">
    <property type="term" value="C:NMDA selective glutamate receptor complex"/>
    <property type="evidence" value="ECO:0000314"/>
    <property type="project" value="UniProtKB"/>
</dbReference>
<dbReference type="GO" id="GO:0005886">
    <property type="term" value="C:plasma membrane"/>
    <property type="evidence" value="ECO:0000314"/>
    <property type="project" value="UniProtKB"/>
</dbReference>
<dbReference type="GO" id="GO:0098839">
    <property type="term" value="C:postsynaptic density membrane"/>
    <property type="evidence" value="ECO:0000318"/>
    <property type="project" value="GO_Central"/>
</dbReference>
<dbReference type="GO" id="GO:0045211">
    <property type="term" value="C:postsynaptic membrane"/>
    <property type="evidence" value="ECO:0000250"/>
    <property type="project" value="UniProtKB"/>
</dbReference>
<dbReference type="GO" id="GO:0048787">
    <property type="term" value="C:presynaptic active zone membrane"/>
    <property type="evidence" value="ECO:0007669"/>
    <property type="project" value="Ensembl"/>
</dbReference>
<dbReference type="GO" id="GO:0016595">
    <property type="term" value="F:glutamate binding"/>
    <property type="evidence" value="ECO:0007669"/>
    <property type="project" value="Ensembl"/>
</dbReference>
<dbReference type="GO" id="GO:0022849">
    <property type="term" value="F:glutamate-gated calcium ion channel activity"/>
    <property type="evidence" value="ECO:0000314"/>
    <property type="project" value="UniProtKB"/>
</dbReference>
<dbReference type="GO" id="GO:0004970">
    <property type="term" value="F:glutamate-gated receptor activity"/>
    <property type="evidence" value="ECO:0000314"/>
    <property type="project" value="UniProtKB"/>
</dbReference>
<dbReference type="GO" id="GO:0099507">
    <property type="term" value="F:ligand-gated monoatomic ion channel activity involved in regulation of presynaptic membrane potential"/>
    <property type="evidence" value="ECO:0007669"/>
    <property type="project" value="Ensembl"/>
</dbReference>
<dbReference type="GO" id="GO:0004972">
    <property type="term" value="F:NMDA glutamate receptor activity"/>
    <property type="evidence" value="ECO:0000314"/>
    <property type="project" value="UniProtKB"/>
</dbReference>
<dbReference type="GO" id="GO:1904315">
    <property type="term" value="F:transmitter-gated monoatomic ion channel activity involved in regulation of postsynaptic membrane potential"/>
    <property type="evidence" value="ECO:0000318"/>
    <property type="project" value="GO_Central"/>
</dbReference>
<dbReference type="GO" id="GO:0022843">
    <property type="term" value="F:voltage-gated monoatomic cation channel activity"/>
    <property type="evidence" value="ECO:0007669"/>
    <property type="project" value="Ensembl"/>
</dbReference>
<dbReference type="GO" id="GO:0008344">
    <property type="term" value="P:adult locomotory behavior"/>
    <property type="evidence" value="ECO:0007669"/>
    <property type="project" value="Ensembl"/>
</dbReference>
<dbReference type="GO" id="GO:0007420">
    <property type="term" value="P:brain development"/>
    <property type="evidence" value="ECO:0000303"/>
    <property type="project" value="ARUK-UCL"/>
</dbReference>
<dbReference type="GO" id="GO:0097553">
    <property type="term" value="P:calcium ion transmembrane import into cytosol"/>
    <property type="evidence" value="ECO:0000314"/>
    <property type="project" value="UniProtKB"/>
</dbReference>
<dbReference type="GO" id="GO:1905232">
    <property type="term" value="P:cellular response to L-glutamate"/>
    <property type="evidence" value="ECO:0007669"/>
    <property type="project" value="Ensembl"/>
</dbReference>
<dbReference type="GO" id="GO:0098976">
    <property type="term" value="P:excitatory chemical synaptic transmission"/>
    <property type="evidence" value="ECO:0000303"/>
    <property type="project" value="ARUK-UCL"/>
</dbReference>
<dbReference type="GO" id="GO:0060079">
    <property type="term" value="P:excitatory postsynaptic potential"/>
    <property type="evidence" value="ECO:0000318"/>
    <property type="project" value="GO_Central"/>
</dbReference>
<dbReference type="GO" id="GO:0035235">
    <property type="term" value="P:ionotropic glutamate receptor signaling pathway"/>
    <property type="evidence" value="ECO:0000303"/>
    <property type="project" value="ComplexPortal"/>
</dbReference>
<dbReference type="GO" id="GO:0060291">
    <property type="term" value="P:long-term synaptic potentiation"/>
    <property type="evidence" value="ECO:0000318"/>
    <property type="project" value="GO_Central"/>
</dbReference>
<dbReference type="GO" id="GO:0098655">
    <property type="term" value="P:monoatomic cation transmembrane transport"/>
    <property type="evidence" value="ECO:0000314"/>
    <property type="project" value="UniProt"/>
</dbReference>
<dbReference type="GO" id="GO:2000463">
    <property type="term" value="P:positive regulation of excitatory postsynaptic potential"/>
    <property type="evidence" value="ECO:0000303"/>
    <property type="project" value="ComplexPortal"/>
</dbReference>
<dbReference type="GO" id="GO:0051968">
    <property type="term" value="P:positive regulation of synaptic transmission, glutamatergic"/>
    <property type="evidence" value="ECO:0000303"/>
    <property type="project" value="ComplexPortal"/>
</dbReference>
<dbReference type="GO" id="GO:1904062">
    <property type="term" value="P:regulation of monoatomic cation transmembrane transport"/>
    <property type="evidence" value="ECO:0000303"/>
    <property type="project" value="ComplexPortal"/>
</dbReference>
<dbReference type="GO" id="GO:0048168">
    <property type="term" value="P:regulation of neuronal synaptic plasticity"/>
    <property type="evidence" value="ECO:0000303"/>
    <property type="project" value="ComplexPortal"/>
</dbReference>
<dbReference type="GO" id="GO:0051930">
    <property type="term" value="P:regulation of sensory perception of pain"/>
    <property type="evidence" value="ECO:0007669"/>
    <property type="project" value="Ensembl"/>
</dbReference>
<dbReference type="GO" id="GO:0048167">
    <property type="term" value="P:regulation of synaptic plasticity"/>
    <property type="evidence" value="ECO:0000250"/>
    <property type="project" value="UniProtKB"/>
</dbReference>
<dbReference type="GO" id="GO:0001964">
    <property type="term" value="P:startle response"/>
    <property type="evidence" value="ECO:0007669"/>
    <property type="project" value="Ensembl"/>
</dbReference>
<dbReference type="GO" id="GO:0035249">
    <property type="term" value="P:synaptic transmission, glutamatergic"/>
    <property type="evidence" value="ECO:0000318"/>
    <property type="project" value="GO_Central"/>
</dbReference>
<dbReference type="CDD" id="cd06378">
    <property type="entry name" value="PBP1_iGluR_NMDA_NR2"/>
    <property type="match status" value="1"/>
</dbReference>
<dbReference type="CDD" id="cd13718">
    <property type="entry name" value="PBP2_iGluR_NMDA_Nr2"/>
    <property type="match status" value="1"/>
</dbReference>
<dbReference type="FunFam" id="3.40.50.2300:FF:000626">
    <property type="entry name" value="Glutamate ionotropic receptor NMDA type subunit 2D"/>
    <property type="match status" value="1"/>
</dbReference>
<dbReference type="FunFam" id="3.40.190.10:FF:000397">
    <property type="entry name" value="Glutamate receptor ionotropic, NMDA 2D"/>
    <property type="match status" value="1"/>
</dbReference>
<dbReference type="FunFam" id="3.40.190.10:FF:000007">
    <property type="entry name" value="Putative glutamate receptor ionotropic NMDA 2B"/>
    <property type="match status" value="1"/>
</dbReference>
<dbReference type="Gene3D" id="3.40.50.2300">
    <property type="match status" value="2"/>
</dbReference>
<dbReference type="Gene3D" id="3.40.190.10">
    <property type="entry name" value="Periplasmic binding protein-like II"/>
    <property type="match status" value="2"/>
</dbReference>
<dbReference type="InterPro" id="IPR001828">
    <property type="entry name" value="ANF_lig-bd_rcpt"/>
</dbReference>
<dbReference type="InterPro" id="IPR019594">
    <property type="entry name" value="Glu/Gly-bd"/>
</dbReference>
<dbReference type="InterPro" id="IPR001508">
    <property type="entry name" value="Iono_Glu_rcpt_met"/>
</dbReference>
<dbReference type="InterPro" id="IPR015683">
    <property type="entry name" value="Ionotropic_Glu_rcpt"/>
</dbReference>
<dbReference type="InterPro" id="IPR001320">
    <property type="entry name" value="Iontro_rcpt_C"/>
</dbReference>
<dbReference type="InterPro" id="IPR028082">
    <property type="entry name" value="Peripla_BP_I"/>
</dbReference>
<dbReference type="PANTHER" id="PTHR18966">
    <property type="entry name" value="IONOTROPIC GLUTAMATE RECEPTOR"/>
    <property type="match status" value="1"/>
</dbReference>
<dbReference type="Pfam" id="PF01094">
    <property type="entry name" value="ANF_receptor"/>
    <property type="match status" value="1"/>
</dbReference>
<dbReference type="Pfam" id="PF00060">
    <property type="entry name" value="Lig_chan"/>
    <property type="match status" value="1"/>
</dbReference>
<dbReference type="Pfam" id="PF10613">
    <property type="entry name" value="Lig_chan-Glu_bd"/>
    <property type="match status" value="1"/>
</dbReference>
<dbReference type="PRINTS" id="PR00177">
    <property type="entry name" value="NMDARECEPTOR"/>
</dbReference>
<dbReference type="SMART" id="SM00918">
    <property type="entry name" value="Lig_chan-Glu_bd"/>
    <property type="match status" value="1"/>
</dbReference>
<dbReference type="SMART" id="SM00079">
    <property type="entry name" value="PBPe"/>
    <property type="match status" value="1"/>
</dbReference>
<dbReference type="SUPFAM" id="SSF53822">
    <property type="entry name" value="Periplasmic binding protein-like I"/>
    <property type="match status" value="1"/>
</dbReference>
<dbReference type="SUPFAM" id="SSF53850">
    <property type="entry name" value="Periplasmic binding protein-like II"/>
    <property type="match status" value="1"/>
</dbReference>
<gene>
    <name evidence="17 22" type="primary">GRIN2D</name>
    <name evidence="18" type="synonym">GluN2D</name>
    <name evidence="19" type="synonym">NMDAR2D</name>
</gene>
<feature type="signal peptide" evidence="7">
    <location>
        <begin position="1"/>
        <end position="27"/>
    </location>
</feature>
<feature type="chain" id="PRO_0000011583" description="Glutamate receptor ionotropic, NMDA 2D">
    <location>
        <begin position="28"/>
        <end position="1336"/>
    </location>
</feature>
<feature type="topological domain" description="Extracellular" evidence="21">
    <location>
        <begin position="28"/>
        <end position="582"/>
    </location>
</feature>
<feature type="transmembrane region" description="Helical" evidence="15">
    <location>
        <begin position="583"/>
        <end position="604"/>
    </location>
</feature>
<feature type="topological domain" description="Cytoplasmic" evidence="21">
    <location>
        <begin position="605"/>
        <end position="629"/>
    </location>
</feature>
<feature type="intramembrane region" description="Discontinuously helical" evidence="15">
    <location>
        <begin position="630"/>
        <end position="641"/>
    </location>
</feature>
<feature type="topological domain" description="Cytoplasmic" evidence="21">
    <location>
        <begin position="642"/>
        <end position="653"/>
    </location>
</feature>
<feature type="transmembrane region" description="Helical" evidence="15">
    <location>
        <begin position="654"/>
        <end position="674"/>
    </location>
</feature>
<feature type="topological domain" description="Extracellular" evidence="21">
    <location>
        <begin position="675"/>
        <end position="843"/>
    </location>
</feature>
<feature type="transmembrane region" description="Helical" evidence="15">
    <location>
        <begin position="844"/>
        <end position="867"/>
    </location>
</feature>
<feature type="topological domain" description="Cytoplasmic" evidence="21">
    <location>
        <begin position="868"/>
        <end position="1336"/>
    </location>
</feature>
<feature type="region of interest" description="Pore-forming" evidence="3">
    <location>
        <begin position="631"/>
        <end position="650"/>
    </location>
</feature>
<feature type="region of interest" description="Disordered" evidence="8">
    <location>
        <begin position="900"/>
        <end position="934"/>
    </location>
</feature>
<feature type="region of interest" description="Disordered" evidence="8">
    <location>
        <begin position="981"/>
        <end position="1123"/>
    </location>
</feature>
<feature type="region of interest" description="Disordered" evidence="8">
    <location>
        <begin position="1225"/>
        <end position="1336"/>
    </location>
</feature>
<feature type="short sequence motif" description="PDZ-binding" evidence="1">
    <location>
        <begin position="1334"/>
        <end position="1336"/>
    </location>
</feature>
<feature type="compositionally biased region" description="Pro residues" evidence="8">
    <location>
        <begin position="902"/>
        <end position="932"/>
    </location>
</feature>
<feature type="compositionally biased region" description="Low complexity" evidence="8">
    <location>
        <begin position="981"/>
        <end position="991"/>
    </location>
</feature>
<feature type="compositionally biased region" description="Pro residues" evidence="8">
    <location>
        <begin position="992"/>
        <end position="1006"/>
    </location>
</feature>
<feature type="compositionally biased region" description="Low complexity" evidence="8">
    <location>
        <begin position="1035"/>
        <end position="1044"/>
    </location>
</feature>
<feature type="compositionally biased region" description="Gly residues" evidence="8">
    <location>
        <begin position="1074"/>
        <end position="1089"/>
    </location>
</feature>
<feature type="compositionally biased region" description="Pro residues" evidence="8">
    <location>
        <begin position="1091"/>
        <end position="1104"/>
    </location>
</feature>
<feature type="compositionally biased region" description="Basic residues" evidence="8">
    <location>
        <begin position="1225"/>
        <end position="1240"/>
    </location>
</feature>
<feature type="binding site" evidence="6">
    <location>
        <position position="539"/>
    </location>
    <ligand>
        <name>L-glutamate</name>
        <dbReference type="ChEBI" id="CHEBI:29985"/>
    </ligand>
</feature>
<feature type="binding site" evidence="15 27">
    <location>
        <position position="541"/>
    </location>
    <ligand>
        <name>L-glutamate</name>
        <dbReference type="ChEBI" id="CHEBI:29985"/>
    </ligand>
</feature>
<feature type="binding site" evidence="15 27">
    <location>
        <position position="546"/>
    </location>
    <ligand>
        <name>L-glutamate</name>
        <dbReference type="ChEBI" id="CHEBI:29985"/>
    </ligand>
</feature>
<feature type="binding site" evidence="15 27">
    <location>
        <position position="717"/>
    </location>
    <ligand>
        <name>L-glutamate</name>
        <dbReference type="ChEBI" id="CHEBI:29985"/>
    </ligand>
</feature>
<feature type="binding site" evidence="6">
    <location>
        <position position="718"/>
    </location>
    <ligand>
        <name>L-glutamate</name>
        <dbReference type="ChEBI" id="CHEBI:29985"/>
    </ligand>
</feature>
<feature type="binding site" evidence="15 27">
    <location>
        <position position="759"/>
    </location>
    <ligand>
        <name>L-glutamate</name>
        <dbReference type="ChEBI" id="CHEBI:29985"/>
    </ligand>
</feature>
<feature type="site" description="Functional determinant of NMDA receptors" evidence="1">
    <location>
        <position position="642"/>
    </location>
</feature>
<feature type="modified residue" description="Omega-N-methylarginine" evidence="4">
    <location>
        <position position="1316"/>
    </location>
</feature>
<feature type="modified residue" description="Phosphoserine" evidence="4">
    <location>
        <position position="1326"/>
    </location>
</feature>
<feature type="glycosylation site" description="N-linked (GlcNAc...) asparagine" evidence="7">
    <location>
        <position position="92"/>
    </location>
</feature>
<feature type="glycosylation site" description="N-linked (GlcNAc...) asparagine" evidence="7">
    <location>
        <position position="352"/>
    </location>
</feature>
<feature type="glycosylation site" description="N-linked (GlcNAc...) asparagine" evidence="7">
    <location>
        <position position="366"/>
    </location>
</feature>
<feature type="glycosylation site" description="N-linked (GlcNAc...) asparagine" evidence="7">
    <location>
        <position position="384"/>
    </location>
</feature>
<feature type="glycosylation site" description="N-linked (GlcNAc...) asparagine" evidence="7">
    <location>
        <position position="467"/>
    </location>
</feature>
<feature type="glycosylation site" description="N-linked (GlcNAc...) asparagine" evidence="7">
    <location>
        <position position="569"/>
    </location>
</feature>
<feature type="disulfide bond" evidence="15 23 24 26 28">
    <location>
        <begin position="104"/>
        <end position="348"/>
    </location>
</feature>
<feature type="disulfide bond" evidence="15 23 24 25 28">
    <location>
        <begin position="455"/>
        <end position="483"/>
    </location>
</feature>
<feature type="disulfide bond" evidence="15 23 24 25 26 28">
    <location>
        <begin position="462"/>
        <end position="484"/>
    </location>
</feature>
<feature type="disulfide bond" evidence="15 23 24 25 26 28">
    <location>
        <begin position="773"/>
        <end position="828"/>
    </location>
</feature>
<feature type="sequence variant" id="VAR_035698" description="In a breast cancer sample; somatic mutation." evidence="9">
    <original>P</original>
    <variation>S</variation>
    <location>
        <position position="140"/>
    </location>
</feature>
<feature type="sequence variant" id="VAR_035699" description="In a breast cancer sample; somatic mutation; dbSNP:rs1259830926." evidence="9">
    <original>G</original>
    <variation>R</variation>
    <location>
        <position position="286"/>
    </location>
</feature>
<feature type="sequence variant" id="VAR_079975" description="Found in a patient with schizophrenia; uncertain significance." evidence="10">
    <original>L</original>
    <variation>V</variation>
    <location>
        <position position="466"/>
    </location>
</feature>
<feature type="sequence variant" id="VAR_035700" description="In a breast cancer sample; somatic mutation." evidence="9">
    <original>E</original>
    <variation>G</variation>
    <location>
        <position position="527"/>
    </location>
</feature>
<feature type="sequence variant" id="VAR_079976" description="Found in a patient with autism spectrum disorder; uncertain significance." evidence="10">
    <original>M</original>
    <variation>L</variation>
    <location>
        <position position="592"/>
    </location>
</feature>
<feature type="sequence variant" id="VAR_077103" description="In DEE46; gain-of-function mutation that potentiates ionotropic glutamate receptor signaling; mutant receptors are activated by lower concentrations of glutamate and glycine and show slower deactivation after agonist removal as well as decreased sensitivity to allosteric inhibitors indicating that NMDA glutamate receptor activity is changed; dbSNP:rs886040861." evidence="12">
    <original>V</original>
    <variation>I</variation>
    <location>
        <position position="667"/>
    </location>
</feature>
<feature type="sequence variant" id="VAR_079977" description="Found in a patient with schizophrenia; uncertain significance." evidence="10">
    <original>M</original>
    <variation>V</variation>
    <location>
        <position position="733"/>
    </location>
</feature>
<feature type="sequence variant" id="VAR_079978" description="Found in a patient with schizophrenia; uncertain significance; dbSNP:rs750543659." evidence="10">
    <original>R</original>
    <variation>H</variation>
    <location>
        <position position="872"/>
    </location>
</feature>
<feature type="sequence variant" id="VAR_079979" description="In dbSNP:rs781567305." evidence="10">
    <original>M</original>
    <variation>I</variation>
    <location>
        <position position="883"/>
    </location>
</feature>
<feature type="sequence variant" id="VAR_079980" description="Found in patients with schizophrenia; uncertain significance; dbSNP:rs571334598." evidence="10">
    <original>A</original>
    <variation>V</variation>
    <location>
        <position position="922"/>
    </location>
</feature>
<feature type="sequence variant" id="VAR_079981" description="Found in a patient with autism spectrum disorder; uncertain significance." evidence="10">
    <original>A</original>
    <variation>T</variation>
    <location>
        <position position="926"/>
    </location>
</feature>
<feature type="sequence variant" id="VAR_079982" description="In dbSNP:rs1225338399." evidence="10">
    <original>A</original>
    <variation>P</variation>
    <location>
        <position position="982"/>
    </location>
</feature>
<feature type="sequence variant" id="VAR_079983" description="In dbSNP:rs191119443." evidence="10">
    <original>G</original>
    <variation>S</variation>
    <location>
        <position position="1317"/>
    </location>
</feature>
<feature type="mutagenesis site" description="Changed glutamate-gated calcium ion channel activity characterized by increased glutamate and glycine potency." evidence="13">
    <original>P</original>
    <variation>R</variation>
    <location>
        <position position="580"/>
    </location>
</feature>
<feature type="mutagenesis site" description="Increased glutamate and glycine agonist potency." evidence="14">
    <original>M</original>
    <variation>V</variation>
    <location>
        <position position="845"/>
    </location>
</feature>
<feature type="sequence conflict" description="In Ref. 1; AAC15910." evidence="20" ref="1">
    <original>R</original>
    <variation>G</variation>
    <location>
        <position position="924"/>
    </location>
</feature>
<feature type="sequence conflict" description="In Ref. 1; AAC15910." evidence="20" ref="1">
    <original>P</original>
    <variation>A</variation>
    <location>
        <position position="1005"/>
    </location>
</feature>
<feature type="sequence conflict" description="In Ref. 1; AAC15910." evidence="20" ref="1">
    <original>R</original>
    <variation>C</variation>
    <location>
        <position position="1097"/>
    </location>
</feature>
<feature type="sequence conflict" description="In Ref. 1; AAC15910." evidence="20" ref="1">
    <original>E</original>
    <variation>D</variation>
    <location>
        <position position="1130"/>
    </location>
</feature>
<feature type="strand" evidence="29">
    <location>
        <begin position="54"/>
        <end position="59"/>
    </location>
</feature>
<feature type="helix" evidence="29">
    <location>
        <begin position="60"/>
        <end position="64"/>
    </location>
</feature>
<feature type="turn" evidence="29">
    <location>
        <begin position="65"/>
        <end position="68"/>
    </location>
</feature>
<feature type="helix" evidence="29">
    <location>
        <begin position="69"/>
        <end position="76"/>
    </location>
</feature>
<feature type="strand" evidence="29">
    <location>
        <begin position="87"/>
        <end position="91"/>
    </location>
</feature>
<feature type="strand" evidence="29">
    <location>
        <begin position="94"/>
        <end position="96"/>
    </location>
</feature>
<feature type="helix" evidence="29">
    <location>
        <begin position="99"/>
        <end position="107"/>
    </location>
</feature>
<feature type="strand" evidence="29">
    <location>
        <begin position="115"/>
        <end position="117"/>
    </location>
</feature>
<feature type="helix" evidence="29">
    <location>
        <begin position="127"/>
        <end position="137"/>
    </location>
</feature>
<feature type="strand" evidence="29">
    <location>
        <begin position="141"/>
        <end position="143"/>
    </location>
</feature>
<feature type="helix" evidence="29">
    <location>
        <begin position="168"/>
        <end position="171"/>
    </location>
</feature>
<feature type="helix" evidence="29">
    <location>
        <begin position="174"/>
        <end position="181"/>
    </location>
</feature>
<feature type="strand" evidence="29">
    <location>
        <begin position="186"/>
        <end position="191"/>
    </location>
</feature>
<feature type="helix" evidence="29">
    <location>
        <begin position="197"/>
        <end position="208"/>
    </location>
</feature>
<feature type="strand" evidence="29">
    <location>
        <begin position="216"/>
        <end position="222"/>
    </location>
</feature>
<feature type="turn" evidence="29">
    <location>
        <begin position="225"/>
        <end position="227"/>
    </location>
</feature>
<feature type="helix" evidence="29">
    <location>
        <begin position="229"/>
        <end position="236"/>
    </location>
</feature>
<feature type="strand" evidence="29">
    <location>
        <begin position="242"/>
        <end position="247"/>
    </location>
</feature>
<feature type="turn" evidence="29">
    <location>
        <begin position="250"/>
        <end position="252"/>
    </location>
</feature>
<feature type="helix" evidence="29">
    <location>
        <begin position="253"/>
        <end position="263"/>
    </location>
</feature>
<feature type="strand" evidence="29">
    <location>
        <begin position="266"/>
        <end position="269"/>
    </location>
</feature>
<feature type="strand" evidence="29">
    <location>
        <begin position="271"/>
        <end position="274"/>
    </location>
</feature>
<feature type="strand" evidence="29">
    <location>
        <begin position="304"/>
        <end position="309"/>
    </location>
</feature>
<feature type="helix" evidence="29">
    <location>
        <begin position="310"/>
        <end position="313"/>
    </location>
</feature>
<feature type="helix" evidence="29">
    <location>
        <begin position="316"/>
        <end position="329"/>
    </location>
</feature>
<feature type="helix" evidence="29">
    <location>
        <begin position="332"/>
        <end position="337"/>
    </location>
</feature>
<feature type="helix" evidence="29">
    <location>
        <begin position="359"/>
        <end position="363"/>
    </location>
</feature>
<feature type="strand" evidence="29">
    <location>
        <begin position="367"/>
        <end position="369"/>
    </location>
</feature>
<feature type="strand" evidence="29">
    <location>
        <begin position="372"/>
        <end position="374"/>
    </location>
</feature>
<feature type="strand" evidence="29">
    <location>
        <begin position="387"/>
        <end position="390"/>
    </location>
</feature>
<feature type="strand" evidence="29">
    <location>
        <begin position="394"/>
        <end position="396"/>
    </location>
</feature>
<feature type="strand" evidence="29">
    <location>
        <begin position="400"/>
        <end position="405"/>
    </location>
</feature>
<feature type="strand" evidence="29">
    <location>
        <begin position="408"/>
        <end position="413"/>
    </location>
</feature>
<feature type="strand" evidence="29">
    <location>
        <begin position="417"/>
        <end position="419"/>
    </location>
</feature>
<feature type="strand" evidence="29">
    <location>
        <begin position="430"/>
        <end position="436"/>
    </location>
</feature>
<feature type="turn" evidence="29">
    <location>
        <begin position="440"/>
        <end position="442"/>
    </location>
</feature>
<feature type="strand" evidence="29">
    <location>
        <begin position="443"/>
        <end position="446"/>
    </location>
</feature>
<feature type="strand" evidence="29">
    <location>
        <begin position="451"/>
        <end position="453"/>
    </location>
</feature>
<feature type="strand" evidence="29">
    <location>
        <begin position="483"/>
        <end position="486"/>
    </location>
</feature>
<feature type="helix" evidence="29">
    <location>
        <begin position="487"/>
        <end position="498"/>
    </location>
</feature>
<feature type="strand" evidence="29">
    <location>
        <begin position="502"/>
        <end position="507"/>
    </location>
</feature>
<feature type="strand" evidence="29">
    <location>
        <begin position="510"/>
        <end position="513"/>
    </location>
</feature>
<feature type="strand" evidence="29">
    <location>
        <begin position="515"/>
        <end position="517"/>
    </location>
</feature>
<feature type="strand" evidence="29">
    <location>
        <begin position="520"/>
        <end position="523"/>
    </location>
</feature>
<feature type="helix" evidence="29">
    <location>
        <begin position="524"/>
        <end position="529"/>
    </location>
</feature>
<feature type="strand" evidence="29">
    <location>
        <begin position="534"/>
        <end position="536"/>
    </location>
</feature>
<feature type="helix" evidence="29">
    <location>
        <begin position="544"/>
        <end position="547"/>
    </location>
</feature>
<feature type="strand" evidence="29">
    <location>
        <begin position="550"/>
        <end position="552"/>
    </location>
</feature>
<feature type="strand" evidence="29">
    <location>
        <begin position="556"/>
        <end position="566"/>
    </location>
</feature>
<feature type="helix" evidence="29">
    <location>
        <begin position="634"/>
        <end position="640"/>
    </location>
</feature>
<feature type="helix" evidence="29">
    <location>
        <begin position="656"/>
        <end position="680"/>
    </location>
</feature>
<feature type="strand" evidence="29">
    <location>
        <begin position="692"/>
        <end position="695"/>
    </location>
</feature>
<feature type="helix" evidence="29">
    <location>
        <begin position="696"/>
        <end position="699"/>
    </location>
</feature>
<feature type="helix" evidence="29">
    <location>
        <begin position="701"/>
        <end position="704"/>
    </location>
</feature>
<feature type="helix" evidence="29">
    <location>
        <begin position="718"/>
        <end position="723"/>
    </location>
</feature>
<feature type="helix" evidence="29">
    <location>
        <begin position="727"/>
        <end position="733"/>
    </location>
</feature>
<feature type="turn" evidence="29">
    <location>
        <begin position="734"/>
        <end position="736"/>
    </location>
</feature>
<feature type="helix" evidence="29">
    <location>
        <begin position="743"/>
        <end position="750"/>
    </location>
</feature>
<feature type="strand" evidence="29">
    <location>
        <begin position="756"/>
        <end position="758"/>
    </location>
</feature>
<feature type="helix" evidence="29">
    <location>
        <begin position="763"/>
        <end position="766"/>
    </location>
</feature>
<feature type="strand" evidence="29">
    <location>
        <begin position="773"/>
        <end position="781"/>
    </location>
</feature>
<feature type="strand" evidence="29">
    <location>
        <begin position="784"/>
        <end position="788"/>
    </location>
</feature>
<feature type="helix" evidence="29">
    <location>
        <begin position="800"/>
        <end position="812"/>
    </location>
</feature>
<feature type="turn" evidence="29">
    <location>
        <begin position="813"/>
        <end position="819"/>
    </location>
</feature>
<feature type="helix" evidence="29">
    <location>
        <begin position="820"/>
        <end position="823"/>
    </location>
</feature>
<feature type="helix" evidence="29">
    <location>
        <begin position="849"/>
        <end position="861"/>
    </location>
</feature>
<sequence>MRGAGGPRGPRGPAKMLLLLALACASPFPEEAPGPGGAGGPGGGLGGARPLNVALVFSGPAYAAEAARLGPAVAAAVRSPGLDVRPVALVLNGSDPRSLVLQLCDLLSGLRVHGVVFEDDSRAPAVAPILDFLSAQTSLPIVAVHGGAALVLTPKEKGSTFLQLGSSTEQQLQVIFEVLEEYDWTSFVAVTTRAPGHRAFLSYIEVLTDGSLVGWEHRGALTLDPGAGEAVLSAQLRSVSAQIRLLFCAREEAEPVFRAAEEAGLTGSGYVWFMVGPQLAGGGGSGAPGEPPLLPGGAPLPAGLFAVRSAGWRDDLARRVAAGVAVVARGAQALLRDYGFLPELGHDCRAQNRTHRGESLHRYFMNITWDNRDYSFNEDGFLVNPSLVVISLTRDRTWEVVGSWEQQTLRLKYPLWSRYGRFLQPVDDTQHLTVATLEERPFVIVEPADPISGTCIRDSVPCRSQLNRTHSPPPDAPRPEKRCCKGFCIDILKRLAHTIGFSYDLYLVTNGKHGKKIDGVWNGMIGEVFYQRADMAIGSLTINEERSEIVDFSVPFVETGISVMVARSNGTVSPSAFLEPYSPAVWVMMFVMCLTVVAVTVFIFEYLSPVGYNRSLATGKRPGGSTFTIGKSIWLLWALVFNNSVPVENPRGTTSKIMVLVWAFFAVIFLASYTANLAAFMIQEEYVDTVSGLSDRKFQRPQEQYPPLKFGTVPNGSTEKNIRSNYPDMHSYMVRYNQPRVEEALTQLKAGKLDAFIYDAAVLNYMARKDEGCKLVTIGSGKVFATTGYGIALHKGSRWKRPIDLALLQFLGDDEIEMLERLWLSGICHNDKIEVMSSKLDIDNMAGVFYMLLVAMGLSLLVFAWEHLVYWRLRHCLGPTHRMDFLLAFSRGMYSCCSAEAAPPPAKPPPPPQPLPSPAYPAPRPAPGPAPFVPRERASVDRWRRTKGAGPPGGAGLADGFHRYYGPIEPQGLGLGLGEARAAPRGAAGRPLSPPAAQPPQKPPPSYFAIVRDKEPAEPPAGAFPGFPSPPAPPAAAATAVGPPLCRLAFEDESPPAPARWPRSDPESQPLLGPGAGGAGGTGGAGGGAPAAPPPCRAAPPPCPYLDLEPSPSDSEDSESLGGASLGGLEPWWFADFPYPYAERLGPPPGRYWSVDKLGGWRAGSWDYLPPRSGPAAWHCRHCASLELLPPPRHLSCSHDGLDGGWWAPPPPPWAAGPLPRRRARCGCPRSHPHRPRASHRTPAAAAPHHHRHRRAAGGWDLPPPAPTSRSLEDLSSCPRAAPARRLTGPSRHARRCPHAAHWGPPLPTASHRRHRGGDLGTRRGSAHFSSLESEV</sequence>
<proteinExistence type="evidence at protein level"/>
<name>NMDE4_HUMAN</name>
<evidence type="ECO:0000250" key="1"/>
<evidence type="ECO:0000250" key="2">
    <source>
        <dbReference type="UniProtKB" id="P35438"/>
    </source>
</evidence>
<evidence type="ECO:0000250" key="3">
    <source>
        <dbReference type="UniProtKB" id="Q00960"/>
    </source>
</evidence>
<evidence type="ECO:0000250" key="4">
    <source>
        <dbReference type="UniProtKB" id="Q03391"/>
    </source>
</evidence>
<evidence type="ECO:0000250" key="5">
    <source>
        <dbReference type="UniProtKB" id="Q14957"/>
    </source>
</evidence>
<evidence type="ECO:0000250" key="6">
    <source>
        <dbReference type="UniProtKB" id="Q62645"/>
    </source>
</evidence>
<evidence type="ECO:0000255" key="7"/>
<evidence type="ECO:0000256" key="8">
    <source>
        <dbReference type="SAM" id="MobiDB-lite"/>
    </source>
</evidence>
<evidence type="ECO:0000269" key="9">
    <source>
    </source>
</evidence>
<evidence type="ECO:0000269" key="10">
    <source>
    </source>
</evidence>
<evidence type="ECO:0000269" key="11">
    <source>
    </source>
</evidence>
<evidence type="ECO:0000269" key="12">
    <source>
    </source>
</evidence>
<evidence type="ECO:0000269" key="13">
    <source>
    </source>
</evidence>
<evidence type="ECO:0000269" key="14">
    <source>
    </source>
</evidence>
<evidence type="ECO:0000269" key="15">
    <source>
    </source>
</evidence>
<evidence type="ECO:0000269" key="16">
    <source>
    </source>
</evidence>
<evidence type="ECO:0000303" key="17">
    <source>
    </source>
</evidence>
<evidence type="ECO:0000303" key="18">
    <source>
    </source>
</evidence>
<evidence type="ECO:0000303" key="19">
    <source>
    </source>
</evidence>
<evidence type="ECO:0000305" key="20"/>
<evidence type="ECO:0000305" key="21">
    <source>
    </source>
</evidence>
<evidence type="ECO:0000312" key="22">
    <source>
        <dbReference type="HGNC" id="HGNC:4588"/>
    </source>
</evidence>
<evidence type="ECO:0007744" key="23">
    <source>
        <dbReference type="PDB" id="7YFF"/>
    </source>
</evidence>
<evidence type="ECO:0007744" key="24">
    <source>
        <dbReference type="PDB" id="7YFL"/>
    </source>
</evidence>
<evidence type="ECO:0007744" key="25">
    <source>
        <dbReference type="PDB" id="7YFM"/>
    </source>
</evidence>
<evidence type="ECO:0007744" key="26">
    <source>
        <dbReference type="PDB" id="7YFO"/>
    </source>
</evidence>
<evidence type="ECO:0007744" key="27">
    <source>
        <dbReference type="PDB" id="7YFR"/>
    </source>
</evidence>
<evidence type="ECO:0007744" key="28">
    <source>
        <dbReference type="PDB" id="8E96"/>
    </source>
</evidence>
<evidence type="ECO:0007829" key="29">
    <source>
        <dbReference type="PDB" id="8E96"/>
    </source>
</evidence>